<dbReference type="EMBL" id="D50436">
    <property type="protein sequence ID" value="BAA08927.1"/>
    <property type="molecule type" value="mRNA"/>
</dbReference>
<dbReference type="PIR" id="A39553">
    <property type="entry name" value="A39553"/>
</dbReference>
<dbReference type="RefSeq" id="NP_058822.1">
    <property type="nucleotide sequence ID" value="NM_017126.1"/>
</dbReference>
<dbReference type="SMR" id="P24483"/>
<dbReference type="FunCoup" id="P24483">
    <property type="interactions" value="551"/>
</dbReference>
<dbReference type="STRING" id="10116.ENSRNOP00000016263"/>
<dbReference type="iPTMnet" id="P24483"/>
<dbReference type="PhosphoSitePlus" id="P24483"/>
<dbReference type="PaxDb" id="10116-ENSRNOP00000016263"/>
<dbReference type="GeneID" id="29189"/>
<dbReference type="KEGG" id="rno:29189"/>
<dbReference type="UCSC" id="RGD:62036">
    <property type="organism name" value="rat"/>
</dbReference>
<dbReference type="AGR" id="RGD:62036"/>
<dbReference type="CTD" id="2230"/>
<dbReference type="RGD" id="62036">
    <property type="gene designation" value="Fdx1"/>
</dbReference>
<dbReference type="eggNOG" id="KOG3309">
    <property type="taxonomic scope" value="Eukaryota"/>
</dbReference>
<dbReference type="InParanoid" id="P24483"/>
<dbReference type="OrthoDB" id="268593at2759"/>
<dbReference type="PhylomeDB" id="P24483"/>
<dbReference type="Reactome" id="R-RNO-1362409">
    <property type="pathway name" value="Mitochondrial iron-sulfur cluster biogenesis"/>
</dbReference>
<dbReference type="Reactome" id="R-RNO-196108">
    <property type="pathway name" value="Pregnenolone biosynthesis"/>
</dbReference>
<dbReference type="Reactome" id="R-RNO-211976">
    <property type="pathway name" value="Endogenous sterols"/>
</dbReference>
<dbReference type="Reactome" id="R-RNO-2395516">
    <property type="pathway name" value="Electron transport from NADPH to Ferredoxin"/>
</dbReference>
<dbReference type="Reactome" id="R-RNO-9857492">
    <property type="pathway name" value="Protein lipoylation"/>
</dbReference>
<dbReference type="PRO" id="PR:P24483"/>
<dbReference type="Proteomes" id="UP000002494">
    <property type="component" value="Unplaced"/>
</dbReference>
<dbReference type="GO" id="GO:0030061">
    <property type="term" value="C:mitochondrial crista"/>
    <property type="evidence" value="ECO:0000314"/>
    <property type="project" value="RGD"/>
</dbReference>
<dbReference type="GO" id="GO:0005759">
    <property type="term" value="C:mitochondrial matrix"/>
    <property type="evidence" value="ECO:0000314"/>
    <property type="project" value="UniProtKB"/>
</dbReference>
<dbReference type="GO" id="GO:0005739">
    <property type="term" value="C:mitochondrion"/>
    <property type="evidence" value="ECO:0000318"/>
    <property type="project" value="GO_Central"/>
</dbReference>
<dbReference type="GO" id="GO:0051537">
    <property type="term" value="F:2 iron, 2 sulfur cluster binding"/>
    <property type="evidence" value="ECO:0000250"/>
    <property type="project" value="UniProtKB"/>
</dbReference>
<dbReference type="GO" id="GO:0009055">
    <property type="term" value="F:electron transfer activity"/>
    <property type="evidence" value="ECO:0000314"/>
    <property type="project" value="RGD"/>
</dbReference>
<dbReference type="GO" id="GO:0019899">
    <property type="term" value="F:enzyme binding"/>
    <property type="evidence" value="ECO:0000353"/>
    <property type="project" value="RGD"/>
</dbReference>
<dbReference type="GO" id="GO:0005506">
    <property type="term" value="F:iron ion binding"/>
    <property type="evidence" value="ECO:0000314"/>
    <property type="project" value="RGD"/>
</dbReference>
<dbReference type="GO" id="GO:0030325">
    <property type="term" value="P:adrenal gland development"/>
    <property type="evidence" value="ECO:0000270"/>
    <property type="project" value="RGD"/>
</dbReference>
<dbReference type="GO" id="GO:0071320">
    <property type="term" value="P:cellular response to cAMP"/>
    <property type="evidence" value="ECO:0000266"/>
    <property type="project" value="RGD"/>
</dbReference>
<dbReference type="GO" id="GO:0071872">
    <property type="term" value="P:cellular response to epinephrine stimulus"/>
    <property type="evidence" value="ECO:0000270"/>
    <property type="project" value="RGD"/>
</dbReference>
<dbReference type="GO" id="GO:1904322">
    <property type="term" value="P:cellular response to forskolin"/>
    <property type="evidence" value="ECO:0000270"/>
    <property type="project" value="RGD"/>
</dbReference>
<dbReference type="GO" id="GO:0044320">
    <property type="term" value="P:cellular response to leptin stimulus"/>
    <property type="evidence" value="ECO:0000270"/>
    <property type="project" value="RGD"/>
</dbReference>
<dbReference type="GO" id="GO:0008203">
    <property type="term" value="P:cholesterol metabolic process"/>
    <property type="evidence" value="ECO:0000250"/>
    <property type="project" value="UniProtKB"/>
</dbReference>
<dbReference type="GO" id="GO:0022900">
    <property type="term" value="P:electron transport chain"/>
    <property type="evidence" value="ECO:0000318"/>
    <property type="project" value="GO_Central"/>
</dbReference>
<dbReference type="GO" id="GO:0042446">
    <property type="term" value="P:hormone biosynthetic process"/>
    <property type="evidence" value="ECO:0000250"/>
    <property type="project" value="UniProtKB"/>
</dbReference>
<dbReference type="GO" id="GO:0140647">
    <property type="term" value="P:P450-containing electron transport chain"/>
    <property type="evidence" value="ECO:0007669"/>
    <property type="project" value="InterPro"/>
</dbReference>
<dbReference type="GO" id="GO:0034698">
    <property type="term" value="P:response to gonadotropin"/>
    <property type="evidence" value="ECO:0000270"/>
    <property type="project" value="RGD"/>
</dbReference>
<dbReference type="GO" id="GO:0044321">
    <property type="term" value="P:response to leptin"/>
    <property type="evidence" value="ECO:0000270"/>
    <property type="project" value="RGD"/>
</dbReference>
<dbReference type="GO" id="GO:0006694">
    <property type="term" value="P:steroid biosynthetic process"/>
    <property type="evidence" value="ECO:0007669"/>
    <property type="project" value="UniProtKB-KW"/>
</dbReference>
<dbReference type="CDD" id="cd00207">
    <property type="entry name" value="fer2"/>
    <property type="match status" value="1"/>
</dbReference>
<dbReference type="FunFam" id="3.10.20.30:FF:000013">
    <property type="entry name" value="Adrenodoxin, mitochondrial"/>
    <property type="match status" value="1"/>
</dbReference>
<dbReference type="Gene3D" id="3.10.20.30">
    <property type="match status" value="1"/>
</dbReference>
<dbReference type="InterPro" id="IPR036010">
    <property type="entry name" value="2Fe-2S_ferredoxin-like_sf"/>
</dbReference>
<dbReference type="InterPro" id="IPR001041">
    <property type="entry name" value="2Fe-2S_ferredoxin-type"/>
</dbReference>
<dbReference type="InterPro" id="IPR001055">
    <property type="entry name" value="Adrenodoxin-like"/>
</dbReference>
<dbReference type="InterPro" id="IPR018298">
    <property type="entry name" value="Adrenodoxin_Fe-S_BS"/>
</dbReference>
<dbReference type="InterPro" id="IPR012675">
    <property type="entry name" value="Beta-grasp_dom_sf"/>
</dbReference>
<dbReference type="PANTHER" id="PTHR23426:SF26">
    <property type="entry name" value="ADRENODOXIN, MITOCHONDRIAL"/>
    <property type="match status" value="1"/>
</dbReference>
<dbReference type="PANTHER" id="PTHR23426">
    <property type="entry name" value="FERREDOXIN/ADRENODOXIN"/>
    <property type="match status" value="1"/>
</dbReference>
<dbReference type="Pfam" id="PF00111">
    <property type="entry name" value="Fer2"/>
    <property type="match status" value="1"/>
</dbReference>
<dbReference type="PRINTS" id="PR00355">
    <property type="entry name" value="ADRENODOXIN"/>
</dbReference>
<dbReference type="SUPFAM" id="SSF54292">
    <property type="entry name" value="2Fe-2S ferredoxin-like"/>
    <property type="match status" value="1"/>
</dbReference>
<dbReference type="PROSITE" id="PS51085">
    <property type="entry name" value="2FE2S_FER_2"/>
    <property type="match status" value="1"/>
</dbReference>
<dbReference type="PROSITE" id="PS00814">
    <property type="entry name" value="ADX"/>
    <property type="match status" value="1"/>
</dbReference>
<name>ADX_RAT</name>
<comment type="function">
    <text evidence="1">Essential for the synthesis of various steroid hormones. Participates in the reduction of mitochondrial cytochrome P450 for steroidogenesis. Transfers electrons from adrenodoxin reductase to CYP11A1, a cytochrome P450 that catalyzes cholesterol side-chain cleavage. Does not form a ternary complex with adrenodoxin reductase and CYP11A1 but shuttles between the two enzymes to transfer electrons.</text>
</comment>
<comment type="cofactor">
    <cofactor>
        <name>[2Fe-2S] cluster</name>
        <dbReference type="ChEBI" id="CHEBI:190135"/>
    </cofactor>
    <text>Binds 1 [2Fe-2S] cluster.</text>
</comment>
<comment type="subunit">
    <text evidence="2">Interacts with CYP11A1.</text>
</comment>
<comment type="subcellular location">
    <subcellularLocation>
        <location evidence="5">Mitochondrion matrix</location>
    </subcellularLocation>
</comment>
<comment type="tissue specificity">
    <text>Found in all tissues, most abundant in adrenals, ovaries and testes.</text>
</comment>
<comment type="similarity">
    <text evidence="6">Belongs to the adrenodoxin/putidaredoxin family.</text>
</comment>
<protein>
    <recommendedName>
        <fullName>Adrenodoxin, mitochondrial</fullName>
    </recommendedName>
    <alternativeName>
        <fullName>Adrenal ferredoxin</fullName>
    </alternativeName>
    <alternativeName>
        <fullName>Ferredoxin-1</fullName>
    </alternativeName>
</protein>
<sequence length="188" mass="20135">MAAAPGARLLRAACASVAFRGLDCRRLLVCGTRAGPAVPQWTPSPHTLAEAGPGRPLSVSARARSSSEDKVTVHFKNRDGETLTTKGKVGDSLLDVVIENNLDIDGFGACEGTLACSTCHLIFEDHIYEKLDAITDEENDMLDLAFGLTNRSRLGCQVCLTKAMDNMTVRVPEAVADVRQSVDMSKNS</sequence>
<evidence type="ECO:0000250" key="1">
    <source>
        <dbReference type="UniProtKB" id="P00257"/>
    </source>
</evidence>
<evidence type="ECO:0000250" key="2">
    <source>
        <dbReference type="UniProtKB" id="P10109"/>
    </source>
</evidence>
<evidence type="ECO:0000250" key="3">
    <source>
        <dbReference type="UniProtKB" id="P46656"/>
    </source>
</evidence>
<evidence type="ECO:0000255" key="4">
    <source>
        <dbReference type="PROSITE-ProRule" id="PRU00465"/>
    </source>
</evidence>
<evidence type="ECO:0000269" key="5">
    <source>
    </source>
</evidence>
<evidence type="ECO:0000305" key="6"/>
<accession>P24483</accession>
<gene>
    <name type="primary">Fdx1</name>
</gene>
<keyword id="KW-0001">2Fe-2S</keyword>
<keyword id="KW-0007">Acetylation</keyword>
<keyword id="KW-0153">Cholesterol metabolism</keyword>
<keyword id="KW-0249">Electron transport</keyword>
<keyword id="KW-0408">Iron</keyword>
<keyword id="KW-0411">Iron-sulfur</keyword>
<keyword id="KW-0443">Lipid metabolism</keyword>
<keyword id="KW-0479">Metal-binding</keyword>
<keyword id="KW-0496">Mitochondrion</keyword>
<keyword id="KW-0597">Phosphoprotein</keyword>
<keyword id="KW-1185">Reference proteome</keyword>
<keyword id="KW-0753">Steroid metabolism</keyword>
<keyword id="KW-0755">Steroidogenesis</keyword>
<keyword id="KW-1207">Sterol metabolism</keyword>
<keyword id="KW-0809">Transit peptide</keyword>
<keyword id="KW-0813">Transport</keyword>
<feature type="transit peptide" description="Mitochondrion">
    <location>
        <begin position="1"/>
        <end position="64"/>
    </location>
</feature>
<feature type="chain" id="PRO_0000000991" description="Adrenodoxin, mitochondrial">
    <location>
        <begin position="65"/>
        <end position="188"/>
    </location>
</feature>
<feature type="domain" description="2Fe-2S ferredoxin-type" evidence="4">
    <location>
        <begin position="69"/>
        <end position="175"/>
    </location>
</feature>
<feature type="binding site" evidence="4">
    <location>
        <position position="110"/>
    </location>
    <ligand>
        <name>[2Fe-2S] cluster</name>
        <dbReference type="ChEBI" id="CHEBI:190135"/>
    </ligand>
</feature>
<feature type="binding site" evidence="4">
    <location>
        <position position="116"/>
    </location>
    <ligand>
        <name>[2Fe-2S] cluster</name>
        <dbReference type="ChEBI" id="CHEBI:190135"/>
    </ligand>
</feature>
<feature type="binding site" evidence="4">
    <location>
        <position position="119"/>
    </location>
    <ligand>
        <name>[2Fe-2S] cluster</name>
        <dbReference type="ChEBI" id="CHEBI:190135"/>
    </ligand>
</feature>
<feature type="binding site" evidence="4">
    <location>
        <position position="156"/>
    </location>
    <ligand>
        <name>[2Fe-2S] cluster</name>
        <dbReference type="ChEBI" id="CHEBI:190135"/>
    </ligand>
</feature>
<feature type="modified residue" description="Phosphoserine" evidence="3">
    <location>
        <position position="67"/>
    </location>
</feature>
<feature type="modified residue" description="N6-acetyllysine; alternate" evidence="3">
    <location>
        <position position="70"/>
    </location>
</feature>
<feature type="modified residue" description="N6-succinyllysine; alternate" evidence="3">
    <location>
        <position position="70"/>
    </location>
</feature>
<feature type="modified residue" description="N6-succinyllysine" evidence="3">
    <location>
        <position position="162"/>
    </location>
</feature>
<feature type="modified residue" description="Phosphoserine" evidence="2">
    <location>
        <position position="181"/>
    </location>
</feature>
<reference key="1">
    <citation type="journal article" date="1991" name="DNA Cell Biol.">
        <title>Expression and regulation of adrenodoxin and P450scc mRNA in rodent tissues.</title>
        <authorList>
            <person name="Mellon S.H."/>
            <person name="Kushner J.A."/>
            <person name="Vaisse C."/>
        </authorList>
    </citation>
    <scope>NUCLEOTIDE SEQUENCE [MRNA]</scope>
    <source>
        <tissue>Ovary</tissue>
    </source>
</reference>
<reference key="2">
    <citation type="journal article" date="1996" name="Biol. Pharm. Bull.">
        <title>Cloning and sequence analysis of a full-length cDNA of rat adrenodoxin.</title>
        <authorList>
            <person name="Sagara Y."/>
            <person name="Watanabe Y."/>
            <person name="Kawamura K."/>
            <person name="Yubisui T."/>
        </authorList>
    </citation>
    <scope>NUCLEOTIDE SEQUENCE [MRNA]</scope>
    <source>
        <strain>Wistar</strain>
        <tissue>Adrenal gland</tissue>
    </source>
</reference>
<reference key="3">
    <citation type="journal article" date="1990" name="J. Cell Biol.">
        <title>Induction and mitochondrial localization of cytochrome P450scc system enzymes in normal and transformed ovarian granulosa cells.</title>
        <authorList>
            <person name="Hanukoglu I."/>
            <person name="Suh B.S."/>
            <person name="Himmelhoch S."/>
            <person name="Amsterdam A."/>
        </authorList>
    </citation>
    <scope>SUBCELLULAR LOCATION</scope>
</reference>
<organism>
    <name type="scientific">Rattus norvegicus</name>
    <name type="common">Rat</name>
    <dbReference type="NCBI Taxonomy" id="10116"/>
    <lineage>
        <taxon>Eukaryota</taxon>
        <taxon>Metazoa</taxon>
        <taxon>Chordata</taxon>
        <taxon>Craniata</taxon>
        <taxon>Vertebrata</taxon>
        <taxon>Euteleostomi</taxon>
        <taxon>Mammalia</taxon>
        <taxon>Eutheria</taxon>
        <taxon>Euarchontoglires</taxon>
        <taxon>Glires</taxon>
        <taxon>Rodentia</taxon>
        <taxon>Myomorpha</taxon>
        <taxon>Muroidea</taxon>
        <taxon>Muridae</taxon>
        <taxon>Murinae</taxon>
        <taxon>Rattus</taxon>
    </lineage>
</organism>
<proteinExistence type="evidence at transcript level"/>